<organism>
    <name type="scientific">Staphylococcus aureus (strain bovine RF122 / ET3-1)</name>
    <dbReference type="NCBI Taxonomy" id="273036"/>
    <lineage>
        <taxon>Bacteria</taxon>
        <taxon>Bacillati</taxon>
        <taxon>Bacillota</taxon>
        <taxon>Bacilli</taxon>
        <taxon>Bacillales</taxon>
        <taxon>Staphylococcaceae</taxon>
        <taxon>Staphylococcus</taxon>
    </lineage>
</organism>
<keyword id="KW-0238">DNA-binding</keyword>
<keyword id="KW-0413">Isomerase</keyword>
<keyword id="KW-0460">Magnesium</keyword>
<keyword id="KW-0479">Metal-binding</keyword>
<keyword id="KW-0799">Topoisomerase</keyword>
<reference key="1">
    <citation type="journal article" date="2007" name="PLoS ONE">
        <title>Molecular correlates of host specialization in Staphylococcus aureus.</title>
        <authorList>
            <person name="Herron-Olson L."/>
            <person name="Fitzgerald J.R."/>
            <person name="Musser J.M."/>
            <person name="Kapur V."/>
        </authorList>
    </citation>
    <scope>NUCLEOTIDE SEQUENCE [LARGE SCALE GENOMIC DNA]</scope>
    <source>
        <strain>bovine RF122 / ET3-1</strain>
    </source>
</reference>
<feature type="chain" id="PRO_0000286369" description="Putative DNA topoisomerase 3">
    <location>
        <begin position="1"/>
        <end position="711"/>
    </location>
</feature>
<feature type="domain" description="Toprim" evidence="1">
    <location>
        <begin position="2"/>
        <end position="135"/>
    </location>
</feature>
<feature type="domain" description="Topo IA-type catalytic" evidence="2">
    <location>
        <begin position="152"/>
        <end position="580"/>
    </location>
</feature>
<feature type="region of interest" description="Interaction with DNA" evidence="1">
    <location>
        <begin position="186"/>
        <end position="191"/>
    </location>
</feature>
<feature type="region of interest" description="Disordered" evidence="3">
    <location>
        <begin position="691"/>
        <end position="711"/>
    </location>
</feature>
<feature type="active site" description="O-(5'-phospho-DNA)-tyrosine intermediate" evidence="2">
    <location>
        <position position="305"/>
    </location>
</feature>
<feature type="binding site" evidence="1">
    <location>
        <position position="8"/>
    </location>
    <ligand>
        <name>Mg(2+)</name>
        <dbReference type="ChEBI" id="CHEBI:18420"/>
        <note>catalytic</note>
    </ligand>
</feature>
<feature type="binding site" evidence="1">
    <location>
        <position position="104"/>
    </location>
    <ligand>
        <name>Mg(2+)</name>
        <dbReference type="ChEBI" id="CHEBI:18420"/>
        <note>catalytic</note>
    </ligand>
</feature>
<feature type="site" description="Interaction with DNA" evidence="1">
    <location>
        <position position="60"/>
    </location>
</feature>
<feature type="site" description="Interaction with DNA" evidence="1">
    <location>
        <position position="167"/>
    </location>
</feature>
<feature type="site" description="Interaction with DNA" evidence="1">
    <location>
        <position position="175"/>
    </location>
</feature>
<feature type="site" description="Interaction with DNA" evidence="1">
    <location>
        <position position="307"/>
    </location>
</feature>
<comment type="function">
    <text evidence="1">Releases the supercoiling and torsional tension of DNA, which is introduced during the DNA replication and transcription, by transiently cleaving and rejoining one strand of the DNA duplex. Introduces a single-strand break via transesterification at a target site in duplex DNA. The scissile phosphodiester is attacked by the catalytic tyrosine of the enzyme, resulting in the formation of a DNA-(5'-phosphotyrosyl)-enzyme intermediate and the expulsion of a 3'-OH DNA strand. The free DNA strand then undergoes passage around the unbroken strand, thus removing DNA supercoils. Finally, in the religation step, the DNA 3'-OH attacks the covalent intermediate to expel the active-site tyrosine and restore the DNA phosphodiester backbone.</text>
</comment>
<comment type="catalytic activity">
    <reaction evidence="1">
        <text>ATP-independent breakage of single-stranded DNA, followed by passage and rejoining.</text>
        <dbReference type="EC" id="5.6.2.1"/>
    </reaction>
</comment>
<comment type="cofactor">
    <cofactor evidence="1">
        <name>Mg(2+)</name>
        <dbReference type="ChEBI" id="CHEBI:18420"/>
    </cofactor>
</comment>
<comment type="similarity">
    <text evidence="1 2">Belongs to the type IA topoisomerase family.</text>
</comment>
<comment type="caution">
    <text evidence="4">Could be the product of a pseudogene.</text>
</comment>
<comment type="sequence caution" evidence="4">
    <conflict type="frameshift">
        <sequence resource="EMBL" id="AJ938182"/>
    </conflict>
</comment>
<sequence>MKYLILAEKPSVARDIADALQINQKRNGYFENNQYIVTWALGHLVTNATPEQYDKNLKEWRLEDLPIIPKYMKTVVIGKTSKQFKTVKALILDNKVKDIIIATDAGREGELVARLILDKVGNKKPLRRLWISSVTKKAIQQSFKNLKDGRQYNDLYYAALARSEADWIVGINATRALTTKYDAQLSLGRVQTPTIQLVNTRQQEINQFKPQQYYTLSLTVKGFDFQLESNQRYTNKETLEQIVNNLKNVDGKIKSVATKHKKSYPQSLYNLTDLQQDMYRRYKIGPKETLNTLQSLYERHKVVTYPRTDSNYLTTDMVDTMKERIQATMATTYKDQARPLISKTFSSKMSIFNNQKVSDHHAIIPTEVRPVMSDLSNRELKLYDMIVERFLEALMPPHEYDAITVTLEVAGHTFVLKENVTTVLGFKSIRQGESITEMQQPFSEGDEVKISKTNIREHETTPPEYFNEGSLLKAMENPQNFIQLKDKKYAQTLKQTGGIGTVATRADIIDKLFNMNAIESRDGKIKVTSKGKQILELAPEELTSPLLTAQWEEKLLLIERGKYQAKTFINEMKGFTKDVVNGIKNSDRKYKHDNLTTTECPTCGKFMIKVKTKNGQMLVCQDPSCKTKKNVQRKTNARCPNCKKKLTLFGKGKEAVYRCVCGHSETQAHMDQRMKSKSSGKVSRKEMKKYMNKNEGLDNNPFKDALKNLNL</sequence>
<dbReference type="EC" id="5.6.2.1" evidence="1"/>
<dbReference type="EMBL" id="AJ938182">
    <property type="status" value="NOT_ANNOTATED_CDS"/>
    <property type="molecule type" value="Genomic_DNA"/>
</dbReference>
<dbReference type="SMR" id="P0C2W6"/>
<dbReference type="GO" id="GO:0043597">
    <property type="term" value="C:cytoplasmic replication fork"/>
    <property type="evidence" value="ECO:0007669"/>
    <property type="project" value="TreeGrafter"/>
</dbReference>
<dbReference type="GO" id="GO:0003677">
    <property type="term" value="F:DNA binding"/>
    <property type="evidence" value="ECO:0007669"/>
    <property type="project" value="UniProtKB-KW"/>
</dbReference>
<dbReference type="GO" id="GO:0003917">
    <property type="term" value="F:DNA topoisomerase type I (single strand cut, ATP-independent) activity"/>
    <property type="evidence" value="ECO:0007669"/>
    <property type="project" value="UniProtKB-UniRule"/>
</dbReference>
<dbReference type="GO" id="GO:0000287">
    <property type="term" value="F:magnesium ion binding"/>
    <property type="evidence" value="ECO:0007669"/>
    <property type="project" value="UniProtKB-UniRule"/>
</dbReference>
<dbReference type="GO" id="GO:0006310">
    <property type="term" value="P:DNA recombination"/>
    <property type="evidence" value="ECO:0007669"/>
    <property type="project" value="TreeGrafter"/>
</dbReference>
<dbReference type="GO" id="GO:0006281">
    <property type="term" value="P:DNA repair"/>
    <property type="evidence" value="ECO:0007669"/>
    <property type="project" value="TreeGrafter"/>
</dbReference>
<dbReference type="GO" id="GO:0006265">
    <property type="term" value="P:DNA topological change"/>
    <property type="evidence" value="ECO:0007669"/>
    <property type="project" value="UniProtKB-UniRule"/>
</dbReference>
<dbReference type="CDD" id="cd00186">
    <property type="entry name" value="TOP1Ac"/>
    <property type="match status" value="1"/>
</dbReference>
<dbReference type="CDD" id="cd03362">
    <property type="entry name" value="TOPRIM_TopoIA_TopoIII"/>
    <property type="match status" value="1"/>
</dbReference>
<dbReference type="Gene3D" id="3.40.50.140">
    <property type="match status" value="1"/>
</dbReference>
<dbReference type="Gene3D" id="1.10.460.10">
    <property type="entry name" value="Topoisomerase I, domain 2"/>
    <property type="match status" value="1"/>
</dbReference>
<dbReference type="Gene3D" id="2.70.20.10">
    <property type="entry name" value="Topoisomerase I, domain 3"/>
    <property type="match status" value="1"/>
</dbReference>
<dbReference type="Gene3D" id="1.10.290.10">
    <property type="entry name" value="Topoisomerase I, domain 4"/>
    <property type="match status" value="1"/>
</dbReference>
<dbReference type="HAMAP" id="MF_00953">
    <property type="entry name" value="Topoisom_3_prok"/>
    <property type="match status" value="1"/>
</dbReference>
<dbReference type="InterPro" id="IPR000380">
    <property type="entry name" value="Topo_IA"/>
</dbReference>
<dbReference type="InterPro" id="IPR003601">
    <property type="entry name" value="Topo_IA_2"/>
</dbReference>
<dbReference type="InterPro" id="IPR023406">
    <property type="entry name" value="Topo_IA_AS"/>
</dbReference>
<dbReference type="InterPro" id="IPR013497">
    <property type="entry name" value="Topo_IA_cen"/>
</dbReference>
<dbReference type="InterPro" id="IPR013824">
    <property type="entry name" value="Topo_IA_cen_sub1"/>
</dbReference>
<dbReference type="InterPro" id="IPR013825">
    <property type="entry name" value="Topo_IA_cen_sub2"/>
</dbReference>
<dbReference type="InterPro" id="IPR013826">
    <property type="entry name" value="Topo_IA_cen_sub3"/>
</dbReference>
<dbReference type="InterPro" id="IPR023405">
    <property type="entry name" value="Topo_IA_core_domain"/>
</dbReference>
<dbReference type="InterPro" id="IPR003602">
    <property type="entry name" value="Topo_IA_DNA-bd_dom"/>
</dbReference>
<dbReference type="InterPro" id="IPR005738">
    <property type="entry name" value="TopoIII"/>
</dbReference>
<dbReference type="InterPro" id="IPR006171">
    <property type="entry name" value="TOPRIM_dom"/>
</dbReference>
<dbReference type="InterPro" id="IPR034144">
    <property type="entry name" value="TOPRIM_TopoIII"/>
</dbReference>
<dbReference type="NCBIfam" id="NF005829">
    <property type="entry name" value="PRK07726.1"/>
    <property type="match status" value="1"/>
</dbReference>
<dbReference type="NCBIfam" id="TIGR01056">
    <property type="entry name" value="topB"/>
    <property type="match status" value="1"/>
</dbReference>
<dbReference type="PANTHER" id="PTHR11390:SF21">
    <property type="entry name" value="DNA TOPOISOMERASE 3-ALPHA"/>
    <property type="match status" value="1"/>
</dbReference>
<dbReference type="PANTHER" id="PTHR11390">
    <property type="entry name" value="PROKARYOTIC DNA TOPOISOMERASE"/>
    <property type="match status" value="1"/>
</dbReference>
<dbReference type="Pfam" id="PF01131">
    <property type="entry name" value="Topoisom_bac"/>
    <property type="match status" value="1"/>
</dbReference>
<dbReference type="Pfam" id="PF01751">
    <property type="entry name" value="Toprim"/>
    <property type="match status" value="1"/>
</dbReference>
<dbReference type="PRINTS" id="PR00417">
    <property type="entry name" value="PRTPISMRASEI"/>
</dbReference>
<dbReference type="SMART" id="SM00437">
    <property type="entry name" value="TOP1Ac"/>
    <property type="match status" value="1"/>
</dbReference>
<dbReference type="SMART" id="SM00436">
    <property type="entry name" value="TOP1Bc"/>
    <property type="match status" value="1"/>
</dbReference>
<dbReference type="SMART" id="SM00493">
    <property type="entry name" value="TOPRIM"/>
    <property type="match status" value="1"/>
</dbReference>
<dbReference type="SUPFAM" id="SSF56712">
    <property type="entry name" value="Prokaryotic type I DNA topoisomerase"/>
    <property type="match status" value="1"/>
</dbReference>
<dbReference type="PROSITE" id="PS00396">
    <property type="entry name" value="TOPO_IA_1"/>
    <property type="match status" value="1"/>
</dbReference>
<dbReference type="PROSITE" id="PS52039">
    <property type="entry name" value="TOPO_IA_2"/>
    <property type="match status" value="1"/>
</dbReference>
<dbReference type="PROSITE" id="PS50880">
    <property type="entry name" value="TOPRIM"/>
    <property type="match status" value="1"/>
</dbReference>
<proteinExistence type="uncertain"/>
<accession>P0C2W6</accession>
<protein>
    <recommendedName>
        <fullName>Putative DNA topoisomerase 3</fullName>
        <ecNumber evidence="1">5.6.2.1</ecNumber>
    </recommendedName>
    <alternativeName>
        <fullName evidence="1">DNA topoisomerase III</fullName>
    </alternativeName>
</protein>
<gene>
    <name evidence="1" type="primary">topB</name>
    <name type="ordered locus">SAB2126c</name>
</gene>
<name>TOP3_STAAB</name>
<evidence type="ECO:0000255" key="1">
    <source>
        <dbReference type="HAMAP-Rule" id="MF_00953"/>
    </source>
</evidence>
<evidence type="ECO:0000255" key="2">
    <source>
        <dbReference type="PROSITE-ProRule" id="PRU01383"/>
    </source>
</evidence>
<evidence type="ECO:0000256" key="3">
    <source>
        <dbReference type="SAM" id="MobiDB-lite"/>
    </source>
</evidence>
<evidence type="ECO:0000305" key="4"/>